<sequence>MRPILMKGHERPLTFLRYNREGDLLFSCAKDHTPTLWFADNGERLGTYRGHNGAVWCCDVSRDSSRLITGSADQTAKLWDVKSGKELFTFKFNAPTRSVDFAVGDRLAVITTDHFVDRTAAIHVKRIAEDPEEQDAESVLVLHCPDGKKRINRAVWGPLNQTIVSGGEDKVIRIWDAETGKLLKQSDEEVGHKKDITSLCKAADDSHFLTGSLDKTAKLWDMRTLTLLKTYTTVVPVNAVSLSPLLNHVVLGGGQDASAVTTTDHRAGKFEAKFYDKILQEEIGGVKGHFGPINALAFNPDGKSFSSGGEDGYVRLHHFDSDYFNIKI</sequence>
<proteinExistence type="evidence at transcript level"/>
<feature type="chain" id="PRO_0000051039" description="Eukaryotic translation initiation factor 3 subunit I">
    <location>
        <begin position="1"/>
        <end position="328"/>
    </location>
</feature>
<feature type="repeat" description="WD 1">
    <location>
        <begin position="8"/>
        <end position="49"/>
    </location>
</feature>
<feature type="repeat" description="WD 2">
    <location>
        <begin position="50"/>
        <end position="89"/>
    </location>
</feature>
<feature type="repeat" description="WD 3">
    <location>
        <begin position="146"/>
        <end position="185"/>
    </location>
</feature>
<feature type="repeat" description="WD 4">
    <location>
        <begin position="191"/>
        <end position="230"/>
    </location>
</feature>
<feature type="repeat" description="WD 5">
    <location>
        <begin position="288"/>
        <end position="327"/>
    </location>
</feature>
<feature type="sequence conflict" description="In Ref. 2; AAG53616." evidence="2" ref="2">
    <original>EGD</original>
    <variation>QPH</variation>
    <location>
        <begin position="21"/>
        <end position="23"/>
    </location>
</feature>
<feature type="sequence conflict" description="In Ref. 2; AAG53616." evidence="2" ref="2">
    <original>L</original>
    <variation>F</variation>
    <location>
        <position position="107"/>
    </location>
</feature>
<feature type="sequence conflict" description="In Ref. 1; AAC49079." evidence="2" ref="1">
    <original>RIA</original>
    <variation>AYC</variation>
    <location>
        <begin position="126"/>
        <end position="128"/>
    </location>
</feature>
<feature type="sequence conflict" description="In Ref. 1; AAC49079." evidence="2" ref="1">
    <original>G</original>
    <variation>C</variation>
    <location>
        <position position="166"/>
    </location>
</feature>
<feature type="sequence conflict" description="In Ref. 1; AAC49079." evidence="2" ref="1">
    <original>Q</original>
    <variation>E</variation>
    <location>
        <position position="255"/>
    </location>
</feature>
<feature type="sequence conflict" description="In Ref. 1; AAC49079." evidence="2" ref="1">
    <original>Y</original>
    <variation>C</variation>
    <location>
        <position position="275"/>
    </location>
</feature>
<feature type="sequence conflict" description="In Ref. 5; AAK43862/AAL47346." evidence="2" ref="5">
    <original>S</original>
    <variation>G</variation>
    <location>
        <position position="304"/>
    </location>
</feature>
<feature type="sequence conflict" description="In Ref. 1; AAC49079." evidence="2" ref="1">
    <original>D</original>
    <variation>G</variation>
    <location>
        <position position="311"/>
    </location>
</feature>
<reference key="1">
    <citation type="journal article" date="1995" name="Nature">
        <title>A WD-domain protein that is associated with and phosphorylated by the type II TGF-beta receptor.</title>
        <authorList>
            <person name="Chen R.H."/>
            <person name="Miettinen P.J."/>
            <person name="Maruka E.M."/>
            <person name="Choy L."/>
            <person name="Derynck R."/>
        </authorList>
    </citation>
    <scope>NUCLEOTIDE SEQUENCE [MRNA]</scope>
</reference>
<reference key="2">
    <citation type="journal article" date="2001" name="J. Biol. Chem.">
        <title>Plant initiation factor 3 subunit composition resembles mammalian initiation factor 3 and has a novel subunit.</title>
        <authorList>
            <person name="Burks E.A."/>
            <person name="Bezerra P.P."/>
            <person name="Le H."/>
            <person name="Gallie D.R."/>
            <person name="Browning K.S."/>
        </authorList>
    </citation>
    <scope>NUCLEOTIDE SEQUENCE [MRNA]</scope>
</reference>
<reference key="3">
    <citation type="journal article" date="1999" name="Nature">
        <title>Sequence and analysis of chromosome 2 of the plant Arabidopsis thaliana.</title>
        <authorList>
            <person name="Lin X."/>
            <person name="Kaul S."/>
            <person name="Rounsley S.D."/>
            <person name="Shea T.P."/>
            <person name="Benito M.-I."/>
            <person name="Town C.D."/>
            <person name="Fujii C.Y."/>
            <person name="Mason T.M."/>
            <person name="Bowman C.L."/>
            <person name="Barnstead M.E."/>
            <person name="Feldblyum T.V."/>
            <person name="Buell C.R."/>
            <person name="Ketchum K.A."/>
            <person name="Lee J.J."/>
            <person name="Ronning C.M."/>
            <person name="Koo H.L."/>
            <person name="Moffat K.S."/>
            <person name="Cronin L.A."/>
            <person name="Shen M."/>
            <person name="Pai G."/>
            <person name="Van Aken S."/>
            <person name="Umayam L."/>
            <person name="Tallon L.J."/>
            <person name="Gill J.E."/>
            <person name="Adams M.D."/>
            <person name="Carrera A.J."/>
            <person name="Creasy T.H."/>
            <person name="Goodman H.M."/>
            <person name="Somerville C.R."/>
            <person name="Copenhaver G.P."/>
            <person name="Preuss D."/>
            <person name="Nierman W.C."/>
            <person name="White O."/>
            <person name="Eisen J.A."/>
            <person name="Salzberg S.L."/>
            <person name="Fraser C.M."/>
            <person name="Venter J.C."/>
        </authorList>
    </citation>
    <scope>NUCLEOTIDE SEQUENCE [LARGE SCALE GENOMIC DNA]</scope>
    <source>
        <strain>cv. Columbia</strain>
    </source>
</reference>
<reference key="4">
    <citation type="journal article" date="2017" name="Plant J.">
        <title>Araport11: a complete reannotation of the Arabidopsis thaliana reference genome.</title>
        <authorList>
            <person name="Cheng C.Y."/>
            <person name="Krishnakumar V."/>
            <person name="Chan A.P."/>
            <person name="Thibaud-Nissen F."/>
            <person name="Schobel S."/>
            <person name="Town C.D."/>
        </authorList>
    </citation>
    <scope>GENOME REANNOTATION</scope>
    <source>
        <strain>cv. Columbia</strain>
    </source>
</reference>
<reference key="5">
    <citation type="journal article" date="2003" name="Science">
        <title>Empirical analysis of transcriptional activity in the Arabidopsis genome.</title>
        <authorList>
            <person name="Yamada K."/>
            <person name="Lim J."/>
            <person name="Dale J.M."/>
            <person name="Chen H."/>
            <person name="Shinn P."/>
            <person name="Palm C.J."/>
            <person name="Southwick A.M."/>
            <person name="Wu H.C."/>
            <person name="Kim C.J."/>
            <person name="Nguyen M."/>
            <person name="Pham P.K."/>
            <person name="Cheuk R.F."/>
            <person name="Karlin-Newmann G."/>
            <person name="Liu S.X."/>
            <person name="Lam B."/>
            <person name="Sakano H."/>
            <person name="Wu T."/>
            <person name="Yu G."/>
            <person name="Miranda M."/>
            <person name="Quach H.L."/>
            <person name="Tripp M."/>
            <person name="Chang C.H."/>
            <person name="Lee J.M."/>
            <person name="Toriumi M.J."/>
            <person name="Chan M.M."/>
            <person name="Tang C.C."/>
            <person name="Onodera C.S."/>
            <person name="Deng J.M."/>
            <person name="Akiyama K."/>
            <person name="Ansari Y."/>
            <person name="Arakawa T."/>
            <person name="Banh J."/>
            <person name="Banno F."/>
            <person name="Bowser L."/>
            <person name="Brooks S.Y."/>
            <person name="Carninci P."/>
            <person name="Chao Q."/>
            <person name="Choy N."/>
            <person name="Enju A."/>
            <person name="Goldsmith A.D."/>
            <person name="Gurjal M."/>
            <person name="Hansen N.F."/>
            <person name="Hayashizaki Y."/>
            <person name="Johnson-Hopson C."/>
            <person name="Hsuan V.W."/>
            <person name="Iida K."/>
            <person name="Karnes M."/>
            <person name="Khan S."/>
            <person name="Koesema E."/>
            <person name="Ishida J."/>
            <person name="Jiang P.X."/>
            <person name="Jones T."/>
            <person name="Kawai J."/>
            <person name="Kamiya A."/>
            <person name="Meyers C."/>
            <person name="Nakajima M."/>
            <person name="Narusaka M."/>
            <person name="Seki M."/>
            <person name="Sakurai T."/>
            <person name="Satou M."/>
            <person name="Tamse R."/>
            <person name="Vaysberg M."/>
            <person name="Wallender E.K."/>
            <person name="Wong C."/>
            <person name="Yamamura Y."/>
            <person name="Yuan S."/>
            <person name="Shinozaki K."/>
            <person name="Davis R.W."/>
            <person name="Theologis A."/>
            <person name="Ecker J.R."/>
        </authorList>
    </citation>
    <scope>NUCLEOTIDE SEQUENCE [LARGE SCALE MRNA]</scope>
    <source>
        <strain>cv. Columbia</strain>
    </source>
</reference>
<dbReference type="EMBL" id="U36765">
    <property type="protein sequence ID" value="AAC49079.1"/>
    <property type="molecule type" value="mRNA"/>
</dbReference>
<dbReference type="EMBL" id="AF285835">
    <property type="protein sequence ID" value="AAG53616.1"/>
    <property type="molecule type" value="mRNA"/>
</dbReference>
<dbReference type="EMBL" id="AC005397">
    <property type="protein sequence ID" value="AAC62878.1"/>
    <property type="molecule type" value="Genomic_DNA"/>
</dbReference>
<dbReference type="EMBL" id="CP002685">
    <property type="protein sequence ID" value="AEC10670.1"/>
    <property type="molecule type" value="Genomic_DNA"/>
</dbReference>
<dbReference type="EMBL" id="CP002685">
    <property type="protein sequence ID" value="AEC10671.1"/>
    <property type="molecule type" value="Genomic_DNA"/>
</dbReference>
<dbReference type="EMBL" id="AF370485">
    <property type="protein sequence ID" value="AAK43862.1"/>
    <property type="molecule type" value="mRNA"/>
</dbReference>
<dbReference type="EMBL" id="AY064633">
    <property type="protein sequence ID" value="AAL47346.1"/>
    <property type="molecule type" value="mRNA"/>
</dbReference>
<dbReference type="PIR" id="H84900">
    <property type="entry name" value="H84900"/>
</dbReference>
<dbReference type="PIR" id="S60256">
    <property type="entry name" value="S60256"/>
</dbReference>
<dbReference type="RefSeq" id="NP_182151.1">
    <molecule id="Q38884-1"/>
    <property type="nucleotide sequence ID" value="NM_130191.6"/>
</dbReference>
<dbReference type="RefSeq" id="NP_850450.1">
    <molecule id="Q38884-1"/>
    <property type="nucleotide sequence ID" value="NM_180119.3"/>
</dbReference>
<dbReference type="SMR" id="Q38884"/>
<dbReference type="BioGRID" id="4571">
    <property type="interactions" value="27"/>
</dbReference>
<dbReference type="FunCoup" id="Q38884">
    <property type="interactions" value="4237"/>
</dbReference>
<dbReference type="IntAct" id="Q38884">
    <property type="interactions" value="2"/>
</dbReference>
<dbReference type="STRING" id="3702.Q38884"/>
<dbReference type="PaxDb" id="3702-AT2G46280.1"/>
<dbReference type="ProteomicsDB" id="221938">
    <molecule id="Q38884-1"/>
</dbReference>
<dbReference type="EnsemblPlants" id="AT2G46280.1">
    <molecule id="Q38884-1"/>
    <property type="protein sequence ID" value="AT2G46280.1"/>
    <property type="gene ID" value="AT2G46280"/>
</dbReference>
<dbReference type="EnsemblPlants" id="AT2G46280.2">
    <molecule id="Q38884-1"/>
    <property type="protein sequence ID" value="AT2G46280.2"/>
    <property type="gene ID" value="AT2G46280"/>
</dbReference>
<dbReference type="GeneID" id="819236"/>
<dbReference type="Gramene" id="AT2G46280.1">
    <molecule id="Q38884-1"/>
    <property type="protein sequence ID" value="AT2G46280.1"/>
    <property type="gene ID" value="AT2G46280"/>
</dbReference>
<dbReference type="Gramene" id="AT2G46280.2">
    <molecule id="Q38884-1"/>
    <property type="protein sequence ID" value="AT2G46280.2"/>
    <property type="gene ID" value="AT2G46280"/>
</dbReference>
<dbReference type="KEGG" id="ath:AT2G46280"/>
<dbReference type="Araport" id="AT2G46280"/>
<dbReference type="TAIR" id="AT2G46280">
    <property type="gene designation" value="TRIP-1"/>
</dbReference>
<dbReference type="eggNOG" id="KOG0643">
    <property type="taxonomic scope" value="Eukaryota"/>
</dbReference>
<dbReference type="HOGENOM" id="CLU_043845_0_1_1"/>
<dbReference type="InParanoid" id="Q38884"/>
<dbReference type="OMA" id="VWFSHNG"/>
<dbReference type="OrthoDB" id="24966at2759"/>
<dbReference type="PhylomeDB" id="Q38884"/>
<dbReference type="CD-CODE" id="4299E36E">
    <property type="entry name" value="Nucleolus"/>
</dbReference>
<dbReference type="PRO" id="PR:Q38884"/>
<dbReference type="Proteomes" id="UP000006548">
    <property type="component" value="Chromosome 2"/>
</dbReference>
<dbReference type="ExpressionAtlas" id="Q38884">
    <property type="expression patterns" value="baseline and differential"/>
</dbReference>
<dbReference type="GO" id="GO:0080008">
    <property type="term" value="C:Cul4-RING E3 ubiquitin ligase complex"/>
    <property type="evidence" value="ECO:0000353"/>
    <property type="project" value="TAIR"/>
</dbReference>
<dbReference type="GO" id="GO:0016282">
    <property type="term" value="C:eukaryotic 43S preinitiation complex"/>
    <property type="evidence" value="ECO:0007669"/>
    <property type="project" value="UniProtKB-UniRule"/>
</dbReference>
<dbReference type="GO" id="GO:0033290">
    <property type="term" value="C:eukaryotic 48S preinitiation complex"/>
    <property type="evidence" value="ECO:0007669"/>
    <property type="project" value="UniProtKB-UniRule"/>
</dbReference>
<dbReference type="GO" id="GO:0005852">
    <property type="term" value="C:eukaryotic translation initiation factor 3 complex"/>
    <property type="evidence" value="ECO:0007669"/>
    <property type="project" value="UniProtKB-UniRule"/>
</dbReference>
<dbReference type="GO" id="GO:0003743">
    <property type="term" value="F:translation initiation factor activity"/>
    <property type="evidence" value="ECO:0007669"/>
    <property type="project" value="UniProtKB-UniRule"/>
</dbReference>
<dbReference type="GO" id="GO:0001732">
    <property type="term" value="P:formation of cytoplasmic translation initiation complex"/>
    <property type="evidence" value="ECO:0007669"/>
    <property type="project" value="UniProtKB-UniRule"/>
</dbReference>
<dbReference type="CDD" id="cd00200">
    <property type="entry name" value="WD40"/>
    <property type="match status" value="1"/>
</dbReference>
<dbReference type="FunFam" id="2.130.10.10:FF:000658">
    <property type="entry name" value="Eukaryotic translation initiation factor 3 subunit I"/>
    <property type="match status" value="1"/>
</dbReference>
<dbReference type="Gene3D" id="2.130.10.10">
    <property type="entry name" value="YVTN repeat-like/Quinoprotein amine dehydrogenase"/>
    <property type="match status" value="1"/>
</dbReference>
<dbReference type="HAMAP" id="MF_03008">
    <property type="entry name" value="eIF3i"/>
    <property type="match status" value="1"/>
</dbReference>
<dbReference type="InterPro" id="IPR027525">
    <property type="entry name" value="eIF3i"/>
</dbReference>
<dbReference type="InterPro" id="IPR020472">
    <property type="entry name" value="G-protein_beta_WD-40_rep"/>
</dbReference>
<dbReference type="InterPro" id="IPR015943">
    <property type="entry name" value="WD40/YVTN_repeat-like_dom_sf"/>
</dbReference>
<dbReference type="InterPro" id="IPR019775">
    <property type="entry name" value="WD40_repeat_CS"/>
</dbReference>
<dbReference type="InterPro" id="IPR036322">
    <property type="entry name" value="WD40_repeat_dom_sf"/>
</dbReference>
<dbReference type="InterPro" id="IPR001680">
    <property type="entry name" value="WD40_rpt"/>
</dbReference>
<dbReference type="PANTHER" id="PTHR19877">
    <property type="entry name" value="EUKARYOTIC TRANSLATION INITIATION FACTOR 3 SUBUNIT I"/>
    <property type="match status" value="1"/>
</dbReference>
<dbReference type="PANTHER" id="PTHR19877:SF1">
    <property type="entry name" value="EUKARYOTIC TRANSLATION INITIATION FACTOR 3 SUBUNIT I"/>
    <property type="match status" value="1"/>
</dbReference>
<dbReference type="Pfam" id="PF24805">
    <property type="entry name" value="EIF3I"/>
    <property type="match status" value="1"/>
</dbReference>
<dbReference type="PRINTS" id="PR00320">
    <property type="entry name" value="GPROTEINBRPT"/>
</dbReference>
<dbReference type="SMART" id="SM00320">
    <property type="entry name" value="WD40"/>
    <property type="match status" value="5"/>
</dbReference>
<dbReference type="SUPFAM" id="SSF50978">
    <property type="entry name" value="WD40 repeat-like"/>
    <property type="match status" value="1"/>
</dbReference>
<dbReference type="PROSITE" id="PS00678">
    <property type="entry name" value="WD_REPEATS_1"/>
    <property type="match status" value="2"/>
</dbReference>
<dbReference type="PROSITE" id="PS50082">
    <property type="entry name" value="WD_REPEATS_2"/>
    <property type="match status" value="5"/>
</dbReference>
<dbReference type="PROSITE" id="PS50294">
    <property type="entry name" value="WD_REPEATS_REGION"/>
    <property type="match status" value="2"/>
</dbReference>
<comment type="function">
    <text evidence="1">Component of the eukaryotic translation initiation factor 3 (eIF-3) complex, which is involved in protein synthesis of a specialized repertoire of mRNAs and, together with other initiation factors, stimulates binding of mRNA and methionyl-tRNAi to the 40S ribosome. The eIF-3 complex specifically targets and initiates translation of a subset of mRNAs involved in cell proliferation.</text>
</comment>
<comment type="subunit">
    <text evidence="1">Component of the eukaryotic translation initiation factor 3 (eIF-3) complex.</text>
</comment>
<comment type="subcellular location">
    <subcellularLocation>
        <location evidence="1">Cytoplasm</location>
    </subcellularLocation>
</comment>
<comment type="alternative products">
    <event type="alternative splicing"/>
    <isoform>
        <id>Q38884-1</id>
        <name>1</name>
        <sequence type="displayed"/>
    </isoform>
    <text>A number of isoforms are produced. According to EST sequences.</text>
</comment>
<comment type="similarity">
    <text evidence="1">Belongs to the eIF-3 subunit I family.</text>
</comment>
<evidence type="ECO:0000255" key="1">
    <source>
        <dbReference type="HAMAP-Rule" id="MF_03008"/>
    </source>
</evidence>
<evidence type="ECO:0000305" key="2"/>
<organism>
    <name type="scientific">Arabidopsis thaliana</name>
    <name type="common">Mouse-ear cress</name>
    <dbReference type="NCBI Taxonomy" id="3702"/>
    <lineage>
        <taxon>Eukaryota</taxon>
        <taxon>Viridiplantae</taxon>
        <taxon>Streptophyta</taxon>
        <taxon>Embryophyta</taxon>
        <taxon>Tracheophyta</taxon>
        <taxon>Spermatophyta</taxon>
        <taxon>Magnoliopsida</taxon>
        <taxon>eudicotyledons</taxon>
        <taxon>Gunneridae</taxon>
        <taxon>Pentapetalae</taxon>
        <taxon>rosids</taxon>
        <taxon>malvids</taxon>
        <taxon>Brassicales</taxon>
        <taxon>Brassicaceae</taxon>
        <taxon>Camelineae</taxon>
        <taxon>Arabidopsis</taxon>
    </lineage>
</organism>
<gene>
    <name type="primary">TIF3I1</name>
    <name type="ordered locus">At2g46280</name>
    <name type="ORF">T3F17.7</name>
</gene>
<name>EIF3I_ARATH</name>
<keyword id="KW-0025">Alternative splicing</keyword>
<keyword id="KW-0963">Cytoplasm</keyword>
<keyword id="KW-0396">Initiation factor</keyword>
<keyword id="KW-0648">Protein biosynthesis</keyword>
<keyword id="KW-1185">Reference proteome</keyword>
<keyword id="KW-0677">Repeat</keyword>
<keyword id="KW-0853">WD repeat</keyword>
<protein>
    <recommendedName>
        <fullName evidence="1">Eukaryotic translation initiation factor 3 subunit I</fullName>
        <shortName evidence="1">eIF3i</shortName>
    </recommendedName>
    <alternativeName>
        <fullName evidence="1">Eukaryotic translation initiation factor 3 subunit 2</fullName>
    </alternativeName>
    <alternativeName>
        <fullName>TGF-beta receptor-interacting protein 1</fullName>
        <shortName>TRIP-1</shortName>
    </alternativeName>
    <alternativeName>
        <fullName evidence="1">eIF-3-beta</fullName>
    </alternativeName>
    <alternativeName>
        <fullName evidence="1">eIF3 p36</fullName>
    </alternativeName>
</protein>
<accession>Q38884</accession>
<accession>O82342</accession>
<accession>Q94K09</accession>
<accession>Q9C5Z0</accession>